<keyword id="KW-0997">Cell inner membrane</keyword>
<keyword id="KW-1003">Cell membrane</keyword>
<keyword id="KW-0472">Membrane</keyword>
<keyword id="KW-1185">Reference proteome</keyword>
<keyword id="KW-0812">Transmembrane</keyword>
<keyword id="KW-1133">Transmembrane helix</keyword>
<keyword id="KW-0813">Transport</keyword>
<accession>B7L5F1</accession>
<proteinExistence type="inferred from homology"/>
<dbReference type="EMBL" id="CU928145">
    <property type="protein sequence ID" value="CAU97618.1"/>
    <property type="molecule type" value="Genomic_DNA"/>
</dbReference>
<dbReference type="RefSeq" id="WP_000046661.1">
    <property type="nucleotide sequence ID" value="NZ_CP028304.1"/>
</dbReference>
<dbReference type="SMR" id="B7L5F1"/>
<dbReference type="GeneID" id="93775747"/>
<dbReference type="KEGG" id="eck:EC55989_1764"/>
<dbReference type="HOGENOM" id="CLU_133067_0_4_6"/>
<dbReference type="Proteomes" id="UP000000746">
    <property type="component" value="Chromosome"/>
</dbReference>
<dbReference type="GO" id="GO:0005886">
    <property type="term" value="C:plasma membrane"/>
    <property type="evidence" value="ECO:0007669"/>
    <property type="project" value="UniProtKB-SubCell"/>
</dbReference>
<dbReference type="GO" id="GO:0015199">
    <property type="term" value="F:amino-acid betaine transmembrane transporter activity"/>
    <property type="evidence" value="ECO:0007669"/>
    <property type="project" value="TreeGrafter"/>
</dbReference>
<dbReference type="GO" id="GO:0015297">
    <property type="term" value="F:antiporter activity"/>
    <property type="evidence" value="ECO:0007669"/>
    <property type="project" value="TreeGrafter"/>
</dbReference>
<dbReference type="GO" id="GO:0015220">
    <property type="term" value="F:choline transmembrane transporter activity"/>
    <property type="evidence" value="ECO:0007669"/>
    <property type="project" value="TreeGrafter"/>
</dbReference>
<dbReference type="GO" id="GO:0015606">
    <property type="term" value="F:spermidine transmembrane transporter activity"/>
    <property type="evidence" value="ECO:0007669"/>
    <property type="project" value="UniProtKB-UniRule"/>
</dbReference>
<dbReference type="GO" id="GO:0031460">
    <property type="term" value="P:glycine betaine transport"/>
    <property type="evidence" value="ECO:0007669"/>
    <property type="project" value="TreeGrafter"/>
</dbReference>
<dbReference type="FunFam" id="1.10.3730.20:FF:000001">
    <property type="entry name" value="Quaternary ammonium compound resistance transporter SugE"/>
    <property type="match status" value="1"/>
</dbReference>
<dbReference type="Gene3D" id="1.10.3730.20">
    <property type="match status" value="1"/>
</dbReference>
<dbReference type="HAMAP" id="MF_01597">
    <property type="entry name" value="MdtI"/>
    <property type="match status" value="1"/>
</dbReference>
<dbReference type="InterPro" id="IPR000390">
    <property type="entry name" value="Small_drug/metabolite_transptr"/>
</dbReference>
<dbReference type="InterPro" id="IPR045324">
    <property type="entry name" value="Small_multidrug_res"/>
</dbReference>
<dbReference type="InterPro" id="IPR023737">
    <property type="entry name" value="Spermidine_export_MdtI"/>
</dbReference>
<dbReference type="NCBIfam" id="NF007934">
    <property type="entry name" value="PRK10650.1"/>
    <property type="match status" value="1"/>
</dbReference>
<dbReference type="PANTHER" id="PTHR30561">
    <property type="entry name" value="SMR FAMILY PROTON-DEPENDENT DRUG EFFLUX TRANSPORTER SUGE"/>
    <property type="match status" value="1"/>
</dbReference>
<dbReference type="PANTHER" id="PTHR30561:SF6">
    <property type="entry name" value="SPERMIDINE EXPORT PROTEIN MDTI"/>
    <property type="match status" value="1"/>
</dbReference>
<dbReference type="Pfam" id="PF00893">
    <property type="entry name" value="Multi_Drug_Res"/>
    <property type="match status" value="1"/>
</dbReference>
<dbReference type="SUPFAM" id="SSF103481">
    <property type="entry name" value="Multidrug resistance efflux transporter EmrE"/>
    <property type="match status" value="1"/>
</dbReference>
<organism>
    <name type="scientific">Escherichia coli (strain 55989 / EAEC)</name>
    <dbReference type="NCBI Taxonomy" id="585055"/>
    <lineage>
        <taxon>Bacteria</taxon>
        <taxon>Pseudomonadati</taxon>
        <taxon>Pseudomonadota</taxon>
        <taxon>Gammaproteobacteria</taxon>
        <taxon>Enterobacterales</taxon>
        <taxon>Enterobacteriaceae</taxon>
        <taxon>Escherichia</taxon>
    </lineage>
</organism>
<evidence type="ECO:0000255" key="1">
    <source>
        <dbReference type="HAMAP-Rule" id="MF_01597"/>
    </source>
</evidence>
<comment type="function">
    <text evidence="1">Catalyzes the excretion of spermidine.</text>
</comment>
<comment type="subunit">
    <text evidence="1">Forms a complex with MdtJ.</text>
</comment>
<comment type="subcellular location">
    <subcellularLocation>
        <location evidence="1">Cell inner membrane</location>
        <topology evidence="1">Multi-pass membrane protein</topology>
    </subcellularLocation>
</comment>
<comment type="similarity">
    <text evidence="1">Belongs to the drug/metabolite transporter (DMT) superfamily. Small multidrug resistance (SMR) (TC 2.A.7.1) family. MdtI subfamily.</text>
</comment>
<feature type="chain" id="PRO_1000185769" description="Spermidine export protein MdtI">
    <location>
        <begin position="1"/>
        <end position="109"/>
    </location>
</feature>
<feature type="transmembrane region" description="Helical" evidence="1">
    <location>
        <begin position="6"/>
        <end position="26"/>
    </location>
</feature>
<feature type="transmembrane region" description="Helical" evidence="1">
    <location>
        <begin position="36"/>
        <end position="56"/>
    </location>
</feature>
<feature type="transmembrane region" description="Helical" evidence="1">
    <location>
        <begin position="64"/>
        <end position="84"/>
    </location>
</feature>
<feature type="transmembrane region" description="Helical" evidence="1">
    <location>
        <begin position="88"/>
        <end position="108"/>
    </location>
</feature>
<protein>
    <recommendedName>
        <fullName evidence="1">Spermidine export protein MdtI</fullName>
    </recommendedName>
</protein>
<sequence>MAQFEWVHAAWLALAIVLEIVANVFLKFSDGFRRKIFGLLSLAAVLAAFSALSQAVKGIDLSVAYALWGGFGIAATLAAGWILFGQRLNRKGWIGLVLLLAGMIMVKLA</sequence>
<name>MDTI_ECO55</name>
<gene>
    <name evidence="1" type="primary">mdtI</name>
    <name type="ordered locus">EC55989_1764</name>
</gene>
<reference key="1">
    <citation type="journal article" date="2009" name="PLoS Genet.">
        <title>Organised genome dynamics in the Escherichia coli species results in highly diverse adaptive paths.</title>
        <authorList>
            <person name="Touchon M."/>
            <person name="Hoede C."/>
            <person name="Tenaillon O."/>
            <person name="Barbe V."/>
            <person name="Baeriswyl S."/>
            <person name="Bidet P."/>
            <person name="Bingen E."/>
            <person name="Bonacorsi S."/>
            <person name="Bouchier C."/>
            <person name="Bouvet O."/>
            <person name="Calteau A."/>
            <person name="Chiapello H."/>
            <person name="Clermont O."/>
            <person name="Cruveiller S."/>
            <person name="Danchin A."/>
            <person name="Diard M."/>
            <person name="Dossat C."/>
            <person name="Karoui M.E."/>
            <person name="Frapy E."/>
            <person name="Garry L."/>
            <person name="Ghigo J.M."/>
            <person name="Gilles A.M."/>
            <person name="Johnson J."/>
            <person name="Le Bouguenec C."/>
            <person name="Lescat M."/>
            <person name="Mangenot S."/>
            <person name="Martinez-Jehanne V."/>
            <person name="Matic I."/>
            <person name="Nassif X."/>
            <person name="Oztas S."/>
            <person name="Petit M.A."/>
            <person name="Pichon C."/>
            <person name="Rouy Z."/>
            <person name="Ruf C.S."/>
            <person name="Schneider D."/>
            <person name="Tourret J."/>
            <person name="Vacherie B."/>
            <person name="Vallenet D."/>
            <person name="Medigue C."/>
            <person name="Rocha E.P.C."/>
            <person name="Denamur E."/>
        </authorList>
    </citation>
    <scope>NUCLEOTIDE SEQUENCE [LARGE SCALE GENOMIC DNA]</scope>
    <source>
        <strain>55989 / EAEC</strain>
    </source>
</reference>